<comment type="function">
    <text evidence="6 10 11">Polyprenyl transferase; part of the gene cluster that mediates the biosynthesis of pyripyropene A, a specific human acyl-coenzyme A:cholesterol acyltransferase 2 inhibitor (PubMed:20861902). The first step of the pathway is the synthesis of nicotinyl-CoA from nicotinic acid by the nicotinic acid-CoA ligase pyr1 (PubMed:20861902). Nicotinyl-CoA is then a substrate of polyketide synthase pyr2 to produce 4-hydroxy-6-(3-pyridinyl)-2H-pyran-2-one (HPPO) which is further prenylated by the polyprenyl transferase pyr6 to yield farnesyl-HPPO (PubMed:20861902). The next steps consist of an epoxidation of farnesyl-HPPO to epoxyfarnesyl-HPPO by FAD-dependent monooxygenase pyr5 and a cyclization of the terpenoid portion by the terpene cyclase pyr4 to yield deacetyl-pyripyropene E (PubMed:20861902). The 2 cytochrome P450 monooxygenases pyr3 and pyr9, and the 2 acetyltransferases pyr7 and pyr8 are involved in the conversion of deacetyl-pyripyropene E into pyripyropene A through several cycles of oxidation and acetylation steps (PubMed:20861902). Pyr7 acetylates deacetyl-pyripyropene E to pyripyropene E which is oxidized to 11-deacetyl-pyripyropene O by pyr3, which is in turn acetylated into pyripyropene O by pyr8 (PubMed:21224862, PubMed:26019565). Pyripyropene O is then oxidized to deacetyl-pyripyropene A by pyr9 (PubMed:21224862). Deacetyl-pyripyropene A is finally acetylated to pyripyropene A by pyr8 (PubMed:26019565).</text>
</comment>
<comment type="catalytic activity">
    <reaction evidence="6">
        <text>4-hydroxy-6-(pyridin-3-yl)-2H-pyran-2-one + (2E,6E)-farnesyl diphosphate = 4-hydroxy-3-[(2E,6E)-farnesyl]-6-(pyridin-3-yl)-2H-pyran-2-one + diphosphate</text>
        <dbReference type="Rhea" id="RHEA:64340"/>
        <dbReference type="ChEBI" id="CHEBI:33019"/>
        <dbReference type="ChEBI" id="CHEBI:149707"/>
        <dbReference type="ChEBI" id="CHEBI:149708"/>
        <dbReference type="ChEBI" id="CHEBI:175763"/>
    </reaction>
    <physiologicalReaction direction="left-to-right" evidence="6">
        <dbReference type="Rhea" id="RHEA:64341"/>
    </physiologicalReaction>
</comment>
<comment type="cofactor">
    <cofactor evidence="1">
        <name>Mg(2+)</name>
        <dbReference type="ChEBI" id="CHEBI:18420"/>
    </cofactor>
</comment>
<comment type="pathway">
    <text evidence="6">Secondary metabolite biosynthesis; terpenoid biosynthesis.</text>
</comment>
<comment type="subcellular location">
    <subcellularLocation>
        <location evidence="2">Membrane</location>
        <topology evidence="2">Multi-pass membrane protein</topology>
    </subcellularLocation>
</comment>
<comment type="biotechnology">
    <text evidence="4 5 7">Pyripyropene A and its derivatives have very unique characteristics of selectively inhibiting the acyl-coenzyme A:cholesterol acyltransferase 2 (ACAT2) isozyme (PubMed:18997389). Therefore, pyripyropenes are expected to be developed as a new type of anti-atherosclerotic agent (PubMed:18997389). Furthermore, pyripyropenes have been shown to exhibit anti-angiogenic activity against human umbilical vein endothelial cells (PubMed:19571395). Finally, pyripyropene A also exhibits insecticidal properties (PubMed:8534106).</text>
</comment>
<comment type="similarity">
    <text evidence="9">Belongs to the UbiA prenyltransferase family.</text>
</comment>
<organism>
    <name type="scientific">Aspergillus fumigatus (strain ATCC MYA-4609 / CBS 101355 / FGSC A1100 / Af293)</name>
    <name type="common">Neosartorya fumigata</name>
    <dbReference type="NCBI Taxonomy" id="330879"/>
    <lineage>
        <taxon>Eukaryota</taxon>
        <taxon>Fungi</taxon>
        <taxon>Dikarya</taxon>
        <taxon>Ascomycota</taxon>
        <taxon>Pezizomycotina</taxon>
        <taxon>Eurotiomycetes</taxon>
        <taxon>Eurotiomycetidae</taxon>
        <taxon>Eurotiales</taxon>
        <taxon>Aspergillaceae</taxon>
        <taxon>Aspergillus</taxon>
        <taxon>Aspergillus subgen. Fumigati</taxon>
    </lineage>
</organism>
<sequence length="320" mass="35777">MATAQSPTQLVRTLIDVSRFDKYNCLFAIFPGVWSIFLAAASRHADGVHLPSDWVLGRAGLAFAYTYLLSGAGMVWNDWIDRDIDAQVARTKNRPLASGRLATRAAIIWMLVQYAASVWLMDRMLSGQNLWTFMLPLTTGIILYPFGKRPTTRKLGIYPQYILGASSALTILPAWASVYGDSVAPPDLLAKCLPLCVFLFLWTIYFNTAYSYQDVKDDCRLSVNSSYVLAGQYVHGLLLLQAVAVVMVIPWILHENGSAWLWFSWLGVWTAALAEQLYLFDTKDPSTGGRVHRRNFALGIWNVLACFVELLLVSGSLDMF</sequence>
<accession>Q4WLD0</accession>
<reference key="1">
    <citation type="journal article" date="2005" name="Nature">
        <title>Genomic sequence of the pathogenic and allergenic filamentous fungus Aspergillus fumigatus.</title>
        <authorList>
            <person name="Nierman W.C."/>
            <person name="Pain A."/>
            <person name="Anderson M.J."/>
            <person name="Wortman J.R."/>
            <person name="Kim H.S."/>
            <person name="Arroyo J."/>
            <person name="Berriman M."/>
            <person name="Abe K."/>
            <person name="Archer D.B."/>
            <person name="Bermejo C."/>
            <person name="Bennett J.W."/>
            <person name="Bowyer P."/>
            <person name="Chen D."/>
            <person name="Collins M."/>
            <person name="Coulsen R."/>
            <person name="Davies R."/>
            <person name="Dyer P.S."/>
            <person name="Farman M.L."/>
            <person name="Fedorova N."/>
            <person name="Fedorova N.D."/>
            <person name="Feldblyum T.V."/>
            <person name="Fischer R."/>
            <person name="Fosker N."/>
            <person name="Fraser A."/>
            <person name="Garcia J.L."/>
            <person name="Garcia M.J."/>
            <person name="Goble A."/>
            <person name="Goldman G.H."/>
            <person name="Gomi K."/>
            <person name="Griffith-Jones S."/>
            <person name="Gwilliam R."/>
            <person name="Haas B.J."/>
            <person name="Haas H."/>
            <person name="Harris D.E."/>
            <person name="Horiuchi H."/>
            <person name="Huang J."/>
            <person name="Humphray S."/>
            <person name="Jimenez J."/>
            <person name="Keller N."/>
            <person name="Khouri H."/>
            <person name="Kitamoto K."/>
            <person name="Kobayashi T."/>
            <person name="Konzack S."/>
            <person name="Kulkarni R."/>
            <person name="Kumagai T."/>
            <person name="Lafton A."/>
            <person name="Latge J.-P."/>
            <person name="Li W."/>
            <person name="Lord A."/>
            <person name="Lu C."/>
            <person name="Majoros W.H."/>
            <person name="May G.S."/>
            <person name="Miller B.L."/>
            <person name="Mohamoud Y."/>
            <person name="Molina M."/>
            <person name="Monod M."/>
            <person name="Mouyna I."/>
            <person name="Mulligan S."/>
            <person name="Murphy L.D."/>
            <person name="O'Neil S."/>
            <person name="Paulsen I."/>
            <person name="Penalva M.A."/>
            <person name="Pertea M."/>
            <person name="Price C."/>
            <person name="Pritchard B.L."/>
            <person name="Quail M.A."/>
            <person name="Rabbinowitsch E."/>
            <person name="Rawlins N."/>
            <person name="Rajandream M.A."/>
            <person name="Reichard U."/>
            <person name="Renauld H."/>
            <person name="Robson G.D."/>
            <person name="Rodriguez de Cordoba S."/>
            <person name="Rodriguez-Pena J.M."/>
            <person name="Ronning C.M."/>
            <person name="Rutter S."/>
            <person name="Salzberg S.L."/>
            <person name="Sanchez M."/>
            <person name="Sanchez-Ferrero J.C."/>
            <person name="Saunders D."/>
            <person name="Seeger K."/>
            <person name="Squares R."/>
            <person name="Squares S."/>
            <person name="Takeuchi M."/>
            <person name="Tekaia F."/>
            <person name="Turner G."/>
            <person name="Vazquez de Aldana C.R."/>
            <person name="Weidman J."/>
            <person name="White O."/>
            <person name="Woodward J.R."/>
            <person name="Yu J.-H."/>
            <person name="Fraser C.M."/>
            <person name="Galagan J.E."/>
            <person name="Asai K."/>
            <person name="Machida M."/>
            <person name="Hall N."/>
            <person name="Barrell B.G."/>
            <person name="Denning D.W."/>
        </authorList>
    </citation>
    <scope>NUCLEOTIDE SEQUENCE [LARGE SCALE GENOMIC DNA]</scope>
    <source>
        <strain>ATCC MYA-4609 / CBS 101355 / FGSC A1100 / Af293</strain>
    </source>
</reference>
<reference key="2">
    <citation type="journal article" date="1995" name="Appl. Environ. Microbiol.">
        <title>Aflavinines and other antiinsectan metabolites from the ascostromata of Eupenicillium crustaceum and related species.</title>
        <authorList>
            <person name="Wang H.J."/>
            <person name="Gloer J.B."/>
            <person name="Wicklow D.T."/>
            <person name="Dowd P.F."/>
        </authorList>
    </citation>
    <scope>BIOTECHNOLOGY</scope>
</reference>
<reference key="3">
    <citation type="journal article" date="2008" name="J. Antibiot.">
        <title>Selectivity of pyripyropene derivatives in inhibition toward acyl-CoA:cholesterol acyltransferase 2 isozyme.</title>
        <authorList>
            <person name="Ohshiro T."/>
            <person name="Ohte S."/>
            <person name="Matsuda D."/>
            <person name="Ohtawa M."/>
            <person name="Nagamitsu T."/>
            <person name="Sunazuka T."/>
            <person name="Harigaya Y."/>
            <person name="Rudel L.L."/>
            <person name="Omura S."/>
            <person name="Tomoda H."/>
        </authorList>
    </citation>
    <scope>BIOTECHNOLOGY</scope>
</reference>
<reference key="4">
    <citation type="journal article" date="2009" name="Biol. Pharm. Bull.">
        <title>Pyripyropenes, fungal sesquiterpenes conjugated with alpha-pyrone and pyridine moieties, exhibits anti-angiogenic activity against human umbilical vein endothelial cells.</title>
        <authorList>
            <person name="Hayashi A."/>
            <person name="Arai M."/>
            <person name="Fujita M."/>
            <person name="Kobayashi M."/>
        </authorList>
    </citation>
    <scope>BIOTECHNOLOGY</scope>
</reference>
<reference key="5">
    <citation type="journal article" date="2010" name="Nat. Chem.">
        <title>Reconstitution of a fungal meroterpenoid biosynthesis reveals the involvement of a novel family of terpene cyclases.</title>
        <authorList>
            <person name="Itoh T."/>
            <person name="Tokunaga K."/>
            <person name="Matsuda Y."/>
            <person name="Fujii I."/>
            <person name="Abe I."/>
            <person name="Ebizuka Y."/>
            <person name="Kushiro T."/>
        </authorList>
    </citation>
    <scope>FUNCTION</scope>
    <scope>CATALYTIC ACTIVITY</scope>
</reference>
<reference key="6">
    <citation type="journal article" date="2011" name="J. Antibiot.">
        <title>Characterization of two cytochrome P450 monooxygenase genes of the pyripyropene biosynthetic gene cluster from Penicillium coprobium.</title>
        <authorList>
            <person name="Hu J."/>
            <person name="Okawa H."/>
            <person name="Yamamoto K."/>
            <person name="Oyama K."/>
            <person name="Mitomi M."/>
            <person name="Anzai H."/>
        </authorList>
    </citation>
    <scope>FUNCTION</scope>
</reference>
<reference key="7">
    <citation type="journal article" date="2014" name="Biotechnol. Biotechnol. Equip.">
        <title>Characterization of two acetyltransferase genes in the pyripyropene biosynthetic gene cluster from Penicillium coprobium.</title>
        <authorList>
            <person name="Hu J."/>
            <person name="Furutani A."/>
            <person name="Yamamoto K."/>
            <person name="Oyama K."/>
            <person name="Mitomi M."/>
            <person name="Anzai H."/>
        </authorList>
    </citation>
    <scope>FUNCTION</scope>
</reference>
<proteinExistence type="evidence at protein level"/>
<keyword id="KW-0325">Glycoprotein</keyword>
<keyword id="KW-0472">Membrane</keyword>
<keyword id="KW-1185">Reference proteome</keyword>
<keyword id="KW-0808">Transferase</keyword>
<keyword id="KW-0812">Transmembrane</keyword>
<keyword id="KW-1133">Transmembrane helix</keyword>
<evidence type="ECO:0000250" key="1">
    <source>
        <dbReference type="UniProtKB" id="P32378"/>
    </source>
</evidence>
<evidence type="ECO:0000255" key="2"/>
<evidence type="ECO:0000255" key="3">
    <source>
        <dbReference type="PROSITE-ProRule" id="PRU00498"/>
    </source>
</evidence>
<evidence type="ECO:0000269" key="4">
    <source>
    </source>
</evidence>
<evidence type="ECO:0000269" key="5">
    <source>
    </source>
</evidence>
<evidence type="ECO:0000269" key="6">
    <source>
    </source>
</evidence>
<evidence type="ECO:0000269" key="7">
    <source>
    </source>
</evidence>
<evidence type="ECO:0000303" key="8">
    <source>
    </source>
</evidence>
<evidence type="ECO:0000305" key="9"/>
<evidence type="ECO:0000305" key="10">
    <source>
    </source>
</evidence>
<evidence type="ECO:0000305" key="11">
    <source>
    </source>
</evidence>
<dbReference type="EC" id="2.5.1.-" evidence="6"/>
<dbReference type="EMBL" id="AAHF01000006">
    <property type="protein sequence ID" value="EAL89234.2"/>
    <property type="molecule type" value="Genomic_DNA"/>
</dbReference>
<dbReference type="RefSeq" id="XP_751272.2">
    <property type="nucleotide sequence ID" value="XM_746179.2"/>
</dbReference>
<dbReference type="SMR" id="Q4WLD0"/>
<dbReference type="STRING" id="330879.Q4WLD0"/>
<dbReference type="GlyCosmos" id="Q4WLD0">
    <property type="glycosylation" value="2 sites, No reported glycans"/>
</dbReference>
<dbReference type="EnsemblFungi" id="EAL89234">
    <property type="protein sequence ID" value="EAL89234"/>
    <property type="gene ID" value="AFUA_6G13980"/>
</dbReference>
<dbReference type="GeneID" id="3508588"/>
<dbReference type="KEGG" id="afm:AFUA_6G13980"/>
<dbReference type="VEuPathDB" id="FungiDB:Afu6g13980"/>
<dbReference type="eggNOG" id="KOG1381">
    <property type="taxonomic scope" value="Eukaryota"/>
</dbReference>
<dbReference type="HOGENOM" id="CLU_075330_0_0_1"/>
<dbReference type="InParanoid" id="Q4WLD0"/>
<dbReference type="OMA" id="SGAGMVW"/>
<dbReference type="OrthoDB" id="18170at2759"/>
<dbReference type="UniPathway" id="UPA00213"/>
<dbReference type="Proteomes" id="UP000002530">
    <property type="component" value="Chromosome 6"/>
</dbReference>
<dbReference type="GO" id="GO:0005886">
    <property type="term" value="C:plasma membrane"/>
    <property type="evidence" value="ECO:0000318"/>
    <property type="project" value="GO_Central"/>
</dbReference>
<dbReference type="GO" id="GO:0016740">
    <property type="term" value="F:transferase activity"/>
    <property type="evidence" value="ECO:0000318"/>
    <property type="project" value="GO_Central"/>
</dbReference>
<dbReference type="GO" id="GO:0016765">
    <property type="term" value="F:transferase activity, transferring alkyl or aryl (other than methyl) groups"/>
    <property type="evidence" value="ECO:0007669"/>
    <property type="project" value="InterPro"/>
</dbReference>
<dbReference type="GO" id="GO:0016114">
    <property type="term" value="P:terpenoid biosynthetic process"/>
    <property type="evidence" value="ECO:0007669"/>
    <property type="project" value="UniProtKB-UniPathway"/>
</dbReference>
<dbReference type="CDD" id="cd13959">
    <property type="entry name" value="PT_UbiA_COQ2"/>
    <property type="match status" value="1"/>
</dbReference>
<dbReference type="FunFam" id="1.10.357.140:FF:000008">
    <property type="entry name" value="4-hydroxybenzoate octaprenyltransferase"/>
    <property type="match status" value="1"/>
</dbReference>
<dbReference type="FunFam" id="1.20.120.1780:FF:000001">
    <property type="entry name" value="4-hydroxybenzoate octaprenyltransferase"/>
    <property type="match status" value="1"/>
</dbReference>
<dbReference type="Gene3D" id="1.10.357.140">
    <property type="entry name" value="UbiA prenyltransferase"/>
    <property type="match status" value="1"/>
</dbReference>
<dbReference type="Gene3D" id="1.20.120.1780">
    <property type="entry name" value="UbiA prenyltransferase"/>
    <property type="match status" value="1"/>
</dbReference>
<dbReference type="InterPro" id="IPR039653">
    <property type="entry name" value="Prenyltransferase"/>
</dbReference>
<dbReference type="InterPro" id="IPR000537">
    <property type="entry name" value="UbiA_prenyltransferase"/>
</dbReference>
<dbReference type="InterPro" id="IPR030470">
    <property type="entry name" value="UbiA_prenylTrfase_CS"/>
</dbReference>
<dbReference type="InterPro" id="IPR044878">
    <property type="entry name" value="UbiA_sf"/>
</dbReference>
<dbReference type="PANTHER" id="PTHR11048:SF28">
    <property type="entry name" value="4-HYDROXYBENZOATE POLYPRENYLTRANSFERASE, MITOCHONDRIAL"/>
    <property type="match status" value="1"/>
</dbReference>
<dbReference type="PANTHER" id="PTHR11048">
    <property type="entry name" value="PRENYLTRANSFERASES"/>
    <property type="match status" value="1"/>
</dbReference>
<dbReference type="Pfam" id="PF01040">
    <property type="entry name" value="UbiA"/>
    <property type="match status" value="1"/>
</dbReference>
<dbReference type="PROSITE" id="PS00943">
    <property type="entry name" value="UBIA"/>
    <property type="match status" value="1"/>
</dbReference>
<gene>
    <name evidence="8" type="primary">pyr6</name>
    <name type="ORF">AFUA_6G13980</name>
</gene>
<feature type="chain" id="PRO_0000436759" description="Polyprenyl transferase pyr6">
    <location>
        <begin position="1"/>
        <end position="320"/>
    </location>
</feature>
<feature type="transmembrane region" description="Helical" evidence="2">
    <location>
        <begin position="22"/>
        <end position="42"/>
    </location>
</feature>
<feature type="transmembrane region" description="Helical" evidence="2">
    <location>
        <begin position="60"/>
        <end position="80"/>
    </location>
</feature>
<feature type="transmembrane region" description="Helical" evidence="2">
    <location>
        <begin position="101"/>
        <end position="121"/>
    </location>
</feature>
<feature type="transmembrane region" description="Helical" evidence="2">
    <location>
        <begin position="127"/>
        <end position="147"/>
    </location>
</feature>
<feature type="transmembrane region" description="Helical" evidence="2">
    <location>
        <begin position="155"/>
        <end position="175"/>
    </location>
</feature>
<feature type="transmembrane region" description="Helical" evidence="2">
    <location>
        <begin position="186"/>
        <end position="206"/>
    </location>
</feature>
<feature type="transmembrane region" description="Helical" evidence="2">
    <location>
        <begin position="233"/>
        <end position="253"/>
    </location>
</feature>
<feature type="transmembrane region" description="Helical" evidence="2">
    <location>
        <begin position="260"/>
        <end position="280"/>
    </location>
</feature>
<feature type="transmembrane region" description="Helical" evidence="2">
    <location>
        <begin position="296"/>
        <end position="316"/>
    </location>
</feature>
<feature type="glycosylation site" description="N-linked (GlcNAc...) asparagine" evidence="3">
    <location>
        <position position="224"/>
    </location>
</feature>
<feature type="glycosylation site" description="N-linked (GlcNAc...) asparagine" evidence="3">
    <location>
        <position position="256"/>
    </location>
</feature>
<protein>
    <recommendedName>
        <fullName evidence="8">Polyprenyl transferase pyr6</fullName>
        <ecNumber evidence="6">2.5.1.-</ecNumber>
    </recommendedName>
    <alternativeName>
        <fullName evidence="8">Pyripyropene synthesis protein 6</fullName>
    </alternativeName>
</protein>
<name>PYR6_ASPFU</name>